<evidence type="ECO:0000250" key="1"/>
<evidence type="ECO:0000305" key="2"/>
<feature type="chain" id="PRO_0000281041" description="tRNA threonylcarbamoyladenosine biosynthesis protein TsaE">
    <location>
        <begin position="1"/>
        <end position="144"/>
    </location>
</feature>
<feature type="binding site" evidence="1">
    <location>
        <position position="13"/>
    </location>
    <ligand>
        <name>ATP</name>
        <dbReference type="ChEBI" id="CHEBI:30616"/>
    </ligand>
</feature>
<feature type="binding site" evidence="1">
    <location>
        <begin position="40"/>
        <end position="45"/>
    </location>
    <ligand>
        <name>ATP</name>
        <dbReference type="ChEBI" id="CHEBI:30616"/>
    </ligand>
</feature>
<feature type="binding site" evidence="1">
    <location>
        <position position="44"/>
    </location>
    <ligand>
        <name>Mg(2+)</name>
        <dbReference type="ChEBI" id="CHEBI:18420"/>
    </ligand>
</feature>
<feature type="binding site" evidence="1">
    <location>
        <position position="110"/>
    </location>
    <ligand>
        <name>Mg(2+)</name>
        <dbReference type="ChEBI" id="CHEBI:18420"/>
    </ligand>
</feature>
<feature type="binding site" evidence="1">
    <location>
        <position position="133"/>
    </location>
    <ligand>
        <name>ATP</name>
        <dbReference type="ChEBI" id="CHEBI:30616"/>
    </ligand>
</feature>
<protein>
    <recommendedName>
        <fullName>tRNA threonylcarbamoyladenosine biosynthesis protein TsaE</fullName>
    </recommendedName>
    <alternativeName>
        <fullName>t(6)A37 threonylcarbamoyladenosine biosynthesis protein TsaE</fullName>
    </alternativeName>
</protein>
<organism>
    <name type="scientific">Rickettsia bellii (strain RML369-C)</name>
    <dbReference type="NCBI Taxonomy" id="336407"/>
    <lineage>
        <taxon>Bacteria</taxon>
        <taxon>Pseudomonadati</taxon>
        <taxon>Pseudomonadota</taxon>
        <taxon>Alphaproteobacteria</taxon>
        <taxon>Rickettsiales</taxon>
        <taxon>Rickettsiaceae</taxon>
        <taxon>Rickettsieae</taxon>
        <taxon>Rickettsia</taxon>
        <taxon>belli group</taxon>
    </lineage>
</organism>
<keyword id="KW-0067">ATP-binding</keyword>
<keyword id="KW-0963">Cytoplasm</keyword>
<keyword id="KW-0460">Magnesium</keyword>
<keyword id="KW-0479">Metal-binding</keyword>
<keyword id="KW-0547">Nucleotide-binding</keyword>
<keyword id="KW-0819">tRNA processing</keyword>
<sequence>MQMLNSQTILNSEEETKNFAKAFAATLKPNNIVLLNGDLGVGKTFFCREIIKYFCGENTSIISPTFNLLQTYKTPHFTIYHCDLYRLKSPEEIYELGLEEALSGNLTLIEWSEIIKHLLPTPLIEVNLKLLDDDKRLCNITNEY</sequence>
<reference key="1">
    <citation type="journal article" date="2006" name="PLoS Genet.">
        <title>Genome sequence of Rickettsia bellii illuminates the role of amoebae in gene exchanges between intracellular pathogens.</title>
        <authorList>
            <person name="Ogata H."/>
            <person name="La Scola B."/>
            <person name="Audic S."/>
            <person name="Renesto P."/>
            <person name="Blanc G."/>
            <person name="Robert C."/>
            <person name="Fournier P.-E."/>
            <person name="Claverie J.-M."/>
            <person name="Raoult D."/>
        </authorList>
    </citation>
    <scope>NUCLEOTIDE SEQUENCE [LARGE SCALE GENOMIC DNA]</scope>
    <source>
        <strain>RML369-C</strain>
    </source>
</reference>
<comment type="function">
    <text evidence="1">Required for the formation of a threonylcarbamoyl group on adenosine at position 37 (t(6)A37) in tRNAs that read codons beginning with adenine. Is involved in the transfer of the threonylcarbamoyl moiety of threonylcarbamoyl-AMP (TC-AMP) to the N6 group of A37, together with TsaD and TsaB. TsaE seems to play an indirect role in the t(6)A biosynthesis pathway, possibly in regulating the core enzymatic function of TsaD (By similarity).</text>
</comment>
<comment type="subcellular location">
    <subcellularLocation>
        <location evidence="1">Cytoplasm</location>
    </subcellularLocation>
</comment>
<comment type="similarity">
    <text evidence="2">Belongs to the TsaE family.</text>
</comment>
<gene>
    <name type="primary">tsaE</name>
    <name type="ordered locus">RBE_1286</name>
</gene>
<name>TSAE_RICBR</name>
<proteinExistence type="inferred from homology"/>
<accession>Q1RGZ7</accession>
<dbReference type="EMBL" id="CP000087">
    <property type="protein sequence ID" value="ABE05367.1"/>
    <property type="molecule type" value="Genomic_DNA"/>
</dbReference>
<dbReference type="SMR" id="Q1RGZ7"/>
<dbReference type="KEGG" id="rbe:RBE_1286"/>
<dbReference type="eggNOG" id="COG0802">
    <property type="taxonomic scope" value="Bacteria"/>
</dbReference>
<dbReference type="HOGENOM" id="CLU_087829_3_0_5"/>
<dbReference type="Proteomes" id="UP000001951">
    <property type="component" value="Chromosome"/>
</dbReference>
<dbReference type="GO" id="GO:0005737">
    <property type="term" value="C:cytoplasm"/>
    <property type="evidence" value="ECO:0007669"/>
    <property type="project" value="UniProtKB-SubCell"/>
</dbReference>
<dbReference type="GO" id="GO:0005524">
    <property type="term" value="F:ATP binding"/>
    <property type="evidence" value="ECO:0007669"/>
    <property type="project" value="UniProtKB-KW"/>
</dbReference>
<dbReference type="GO" id="GO:0046872">
    <property type="term" value="F:metal ion binding"/>
    <property type="evidence" value="ECO:0007669"/>
    <property type="project" value="UniProtKB-KW"/>
</dbReference>
<dbReference type="GO" id="GO:0002949">
    <property type="term" value="P:tRNA threonylcarbamoyladenosine modification"/>
    <property type="evidence" value="ECO:0007669"/>
    <property type="project" value="InterPro"/>
</dbReference>
<dbReference type="Gene3D" id="3.40.50.300">
    <property type="entry name" value="P-loop containing nucleotide triphosphate hydrolases"/>
    <property type="match status" value="1"/>
</dbReference>
<dbReference type="InterPro" id="IPR027417">
    <property type="entry name" value="P-loop_NTPase"/>
</dbReference>
<dbReference type="InterPro" id="IPR003442">
    <property type="entry name" value="T6A_TsaE"/>
</dbReference>
<dbReference type="NCBIfam" id="TIGR00150">
    <property type="entry name" value="T6A_YjeE"/>
    <property type="match status" value="1"/>
</dbReference>
<dbReference type="PANTHER" id="PTHR33540">
    <property type="entry name" value="TRNA THREONYLCARBAMOYLADENOSINE BIOSYNTHESIS PROTEIN TSAE"/>
    <property type="match status" value="1"/>
</dbReference>
<dbReference type="PANTHER" id="PTHR33540:SF2">
    <property type="entry name" value="TRNA THREONYLCARBAMOYLADENOSINE BIOSYNTHESIS PROTEIN TSAE"/>
    <property type="match status" value="1"/>
</dbReference>
<dbReference type="Pfam" id="PF02367">
    <property type="entry name" value="TsaE"/>
    <property type="match status" value="1"/>
</dbReference>
<dbReference type="SUPFAM" id="SSF52540">
    <property type="entry name" value="P-loop containing nucleoside triphosphate hydrolases"/>
    <property type="match status" value="1"/>
</dbReference>